<comment type="function">
    <text evidence="2">The physiological role of BioH is to remove the methyl group introduced by BioC when the pimeloyl moiety is complete. It allows to synthesize pimeloyl-ACP via the fatty acid synthetic pathway through the hydrolysis of the ester bonds of pimeloyl-ACP esters.</text>
</comment>
<comment type="catalytic activity">
    <reaction evidence="2">
        <text>6-carboxyhexanoyl-[ACP] methyl ester + H2O = 6-carboxyhexanoyl-[ACP] + methanol + H(+)</text>
        <dbReference type="Rhea" id="RHEA:42700"/>
        <dbReference type="Rhea" id="RHEA-COMP:9955"/>
        <dbReference type="Rhea" id="RHEA-COMP:10186"/>
        <dbReference type="ChEBI" id="CHEBI:15377"/>
        <dbReference type="ChEBI" id="CHEBI:15378"/>
        <dbReference type="ChEBI" id="CHEBI:17790"/>
        <dbReference type="ChEBI" id="CHEBI:78846"/>
        <dbReference type="ChEBI" id="CHEBI:82735"/>
        <dbReference type="EC" id="3.1.1.85"/>
    </reaction>
</comment>
<comment type="pathway">
    <text evidence="2">Cofactor biosynthesis; biotin biosynthesis.</text>
</comment>
<comment type="subunit">
    <text evidence="2">Monomer.</text>
</comment>
<comment type="subcellular location">
    <subcellularLocation>
        <location evidence="2">Cytoplasm</location>
    </subcellularLocation>
</comment>
<comment type="similarity">
    <text evidence="2">Belongs to the AB hydrolase superfamily. Carboxylesterase BioH family.</text>
</comment>
<proteinExistence type="inferred from homology"/>
<sequence>MTTPLYWQTEGEGSDLVLIHGWGMNGAVWQTTSEKLSQHYRVHTVDLSGYGHSAELGCADFDEMVKQVLAQAPKKAAWLGWSLGGLIATKAALTSPERVSQLITVASSPRFSAEKGWRGIKPLVLSQFTEQLKTDFTLTVERFMALQAMGSPNAKQDIKLVKKAVFSRPMPDQQALATGLMILADIDLREAVSQLSMPVCRMYGRLDGLVPIKVAHDMDELMPNSAKIVFEQASHAPFISHNDEFISELRTFLNQHA</sequence>
<feature type="chain" id="PRO_0000204496" description="Pimeloyl-[acyl-carrier protein] methyl ester esterase">
    <location>
        <begin position="1"/>
        <end position="257"/>
    </location>
</feature>
<feature type="domain" description="AB hydrolase-1" evidence="1">
    <location>
        <begin position="16"/>
        <end position="240"/>
    </location>
</feature>
<feature type="active site" description="Nucleophile" evidence="2">
    <location>
        <position position="82"/>
    </location>
</feature>
<feature type="active site" evidence="2">
    <location>
        <position position="207"/>
    </location>
</feature>
<feature type="active site" evidence="2">
    <location>
        <position position="235"/>
    </location>
</feature>
<feature type="binding site" evidence="2">
    <location>
        <position position="22"/>
    </location>
    <ligand>
        <name>substrate</name>
    </ligand>
</feature>
<feature type="binding site" evidence="2">
    <location>
        <begin position="82"/>
        <end position="83"/>
    </location>
    <ligand>
        <name>substrate</name>
    </ligand>
</feature>
<feature type="binding site" evidence="2">
    <location>
        <begin position="143"/>
        <end position="147"/>
    </location>
    <ligand>
        <name>substrate</name>
    </ligand>
</feature>
<feature type="binding site" evidence="2">
    <location>
        <position position="235"/>
    </location>
    <ligand>
        <name>substrate</name>
    </ligand>
</feature>
<dbReference type="EC" id="3.1.1.85" evidence="2"/>
<dbReference type="EMBL" id="CP000020">
    <property type="protein sequence ID" value="AAW84613.1"/>
    <property type="molecule type" value="Genomic_DNA"/>
</dbReference>
<dbReference type="RefSeq" id="WP_011260983.1">
    <property type="nucleotide sequence ID" value="NC_006840.2"/>
</dbReference>
<dbReference type="RefSeq" id="YP_203501.1">
    <property type="nucleotide sequence ID" value="NC_006840.2"/>
</dbReference>
<dbReference type="SMR" id="Q5E8N3"/>
<dbReference type="STRING" id="312309.VF_0118"/>
<dbReference type="ESTHER" id="vibf1-bioh">
    <property type="family name" value="BioH"/>
</dbReference>
<dbReference type="EnsemblBacteria" id="AAW84613">
    <property type="protein sequence ID" value="AAW84613"/>
    <property type="gene ID" value="VF_0118"/>
</dbReference>
<dbReference type="GeneID" id="54162745"/>
<dbReference type="KEGG" id="vfi:VF_0118"/>
<dbReference type="PATRIC" id="fig|312309.11.peg.118"/>
<dbReference type="eggNOG" id="COG2267">
    <property type="taxonomic scope" value="Bacteria"/>
</dbReference>
<dbReference type="HOGENOM" id="CLU_020336_12_2_6"/>
<dbReference type="OrthoDB" id="9780744at2"/>
<dbReference type="UniPathway" id="UPA00078"/>
<dbReference type="Proteomes" id="UP000000537">
    <property type="component" value="Chromosome I"/>
</dbReference>
<dbReference type="GO" id="GO:0005737">
    <property type="term" value="C:cytoplasm"/>
    <property type="evidence" value="ECO:0007669"/>
    <property type="project" value="UniProtKB-SubCell"/>
</dbReference>
<dbReference type="GO" id="GO:0090499">
    <property type="term" value="F:pimelyl-[acyl-carrier protein] methyl ester esterase activity"/>
    <property type="evidence" value="ECO:0007669"/>
    <property type="project" value="UniProtKB-EC"/>
</dbReference>
<dbReference type="GO" id="GO:0009102">
    <property type="term" value="P:biotin biosynthetic process"/>
    <property type="evidence" value="ECO:0007669"/>
    <property type="project" value="UniProtKB-UniRule"/>
</dbReference>
<dbReference type="Gene3D" id="3.40.50.1820">
    <property type="entry name" value="alpha/beta hydrolase"/>
    <property type="match status" value="1"/>
</dbReference>
<dbReference type="HAMAP" id="MF_01260">
    <property type="entry name" value="Carboxylester"/>
    <property type="match status" value="1"/>
</dbReference>
<dbReference type="InterPro" id="IPR000073">
    <property type="entry name" value="AB_hydrolase_1"/>
</dbReference>
<dbReference type="InterPro" id="IPR029058">
    <property type="entry name" value="AB_hydrolase_fold"/>
</dbReference>
<dbReference type="InterPro" id="IPR010076">
    <property type="entry name" value="BioH"/>
</dbReference>
<dbReference type="InterPro" id="IPR050228">
    <property type="entry name" value="Carboxylesterase_BioH"/>
</dbReference>
<dbReference type="NCBIfam" id="TIGR01738">
    <property type="entry name" value="bioH"/>
    <property type="match status" value="1"/>
</dbReference>
<dbReference type="PANTHER" id="PTHR43194">
    <property type="entry name" value="HYDROLASE ALPHA/BETA FOLD FAMILY"/>
    <property type="match status" value="1"/>
</dbReference>
<dbReference type="PANTHER" id="PTHR43194:SF5">
    <property type="entry name" value="PIMELOYL-[ACYL-CARRIER PROTEIN] METHYL ESTER ESTERASE"/>
    <property type="match status" value="1"/>
</dbReference>
<dbReference type="Pfam" id="PF00561">
    <property type="entry name" value="Abhydrolase_1"/>
    <property type="match status" value="1"/>
</dbReference>
<dbReference type="SUPFAM" id="SSF53474">
    <property type="entry name" value="alpha/beta-Hydrolases"/>
    <property type="match status" value="1"/>
</dbReference>
<evidence type="ECO:0000255" key="1"/>
<evidence type="ECO:0000255" key="2">
    <source>
        <dbReference type="HAMAP-Rule" id="MF_01260"/>
    </source>
</evidence>
<name>BIOH_ALIF1</name>
<keyword id="KW-0093">Biotin biosynthesis</keyword>
<keyword id="KW-0963">Cytoplasm</keyword>
<keyword id="KW-0378">Hydrolase</keyword>
<keyword id="KW-1185">Reference proteome</keyword>
<keyword id="KW-0719">Serine esterase</keyword>
<gene>
    <name evidence="2" type="primary">bioH</name>
    <name type="ordered locus">VF_0118</name>
</gene>
<reference key="1">
    <citation type="journal article" date="2005" name="Proc. Natl. Acad. Sci. U.S.A.">
        <title>Complete genome sequence of Vibrio fischeri: a symbiotic bacterium with pathogenic congeners.</title>
        <authorList>
            <person name="Ruby E.G."/>
            <person name="Urbanowski M."/>
            <person name="Campbell J."/>
            <person name="Dunn A."/>
            <person name="Faini M."/>
            <person name="Gunsalus R."/>
            <person name="Lostroh P."/>
            <person name="Lupp C."/>
            <person name="McCann J."/>
            <person name="Millikan D."/>
            <person name="Schaefer A."/>
            <person name="Stabb E."/>
            <person name="Stevens A."/>
            <person name="Visick K."/>
            <person name="Whistler C."/>
            <person name="Greenberg E.P."/>
        </authorList>
    </citation>
    <scope>NUCLEOTIDE SEQUENCE [LARGE SCALE GENOMIC DNA]</scope>
    <source>
        <strain>ATCC 700601 / ES114</strain>
    </source>
</reference>
<accession>Q5E8N3</accession>
<organism>
    <name type="scientific">Aliivibrio fischeri (strain ATCC 700601 / ES114)</name>
    <name type="common">Vibrio fischeri</name>
    <dbReference type="NCBI Taxonomy" id="312309"/>
    <lineage>
        <taxon>Bacteria</taxon>
        <taxon>Pseudomonadati</taxon>
        <taxon>Pseudomonadota</taxon>
        <taxon>Gammaproteobacteria</taxon>
        <taxon>Vibrionales</taxon>
        <taxon>Vibrionaceae</taxon>
        <taxon>Aliivibrio</taxon>
    </lineage>
</organism>
<protein>
    <recommendedName>
        <fullName evidence="2">Pimeloyl-[acyl-carrier protein] methyl ester esterase</fullName>
        <ecNumber evidence="2">3.1.1.85</ecNumber>
    </recommendedName>
    <alternativeName>
        <fullName evidence="2">Biotin synthesis protein BioH</fullName>
    </alternativeName>
    <alternativeName>
        <fullName evidence="2">Carboxylesterase BioH</fullName>
    </alternativeName>
</protein>